<organism>
    <name type="scientific">Vanderwaltozyma polyspora (strain ATCC 22028 / DSM 70294 / BCRC 21397 / CBS 2163 / NBRC 10782 / NRRL Y-8283 / UCD 57-17)</name>
    <name type="common">Kluyveromyces polysporus</name>
    <dbReference type="NCBI Taxonomy" id="436907"/>
    <lineage>
        <taxon>Eukaryota</taxon>
        <taxon>Fungi</taxon>
        <taxon>Dikarya</taxon>
        <taxon>Ascomycota</taxon>
        <taxon>Saccharomycotina</taxon>
        <taxon>Saccharomycetes</taxon>
        <taxon>Saccharomycetales</taxon>
        <taxon>Saccharomycetaceae</taxon>
        <taxon>Vanderwaltozyma</taxon>
    </lineage>
</organism>
<evidence type="ECO:0000250" key="1"/>
<evidence type="ECO:0000255" key="2"/>
<evidence type="ECO:0000255" key="3">
    <source>
        <dbReference type="PROSITE-ProRule" id="PRU10074"/>
    </source>
</evidence>
<evidence type="ECO:0000256" key="4">
    <source>
        <dbReference type="SAM" id="MobiDB-lite"/>
    </source>
</evidence>
<evidence type="ECO:0000305" key="5"/>
<proteinExistence type="inferred from homology"/>
<keyword id="KW-0053">Apoptosis</keyword>
<keyword id="KW-0121">Carboxypeptidase</keyword>
<keyword id="KW-0325">Glycoprotein</keyword>
<keyword id="KW-0333">Golgi apparatus</keyword>
<keyword id="KW-0378">Hydrolase</keyword>
<keyword id="KW-0472">Membrane</keyword>
<keyword id="KW-0645">Protease</keyword>
<keyword id="KW-1185">Reference proteome</keyword>
<keyword id="KW-0732">Signal</keyword>
<keyword id="KW-0812">Transmembrane</keyword>
<keyword id="KW-1133">Transmembrane helix</keyword>
<feature type="signal peptide" evidence="2">
    <location>
        <begin position="1"/>
        <end position="22"/>
    </location>
</feature>
<feature type="chain" id="PRO_0000411951" description="Pheromone-processing carboxypeptidase KEX1">
    <location>
        <begin position="23"/>
        <end position="713"/>
    </location>
</feature>
<feature type="topological domain" description="Lumenal" evidence="2">
    <location>
        <begin position="23"/>
        <end position="616"/>
    </location>
</feature>
<feature type="transmembrane region" description="Helical" evidence="2">
    <location>
        <begin position="617"/>
        <end position="637"/>
    </location>
</feature>
<feature type="topological domain" description="Cytoplasmic" evidence="2">
    <location>
        <begin position="638"/>
        <end position="713"/>
    </location>
</feature>
<feature type="region of interest" description="Disordered" evidence="4">
    <location>
        <begin position="500"/>
        <end position="612"/>
    </location>
</feature>
<feature type="region of interest" description="Disordered" evidence="4">
    <location>
        <begin position="650"/>
        <end position="696"/>
    </location>
</feature>
<feature type="compositionally biased region" description="Acidic residues" evidence="4">
    <location>
        <begin position="512"/>
        <end position="522"/>
    </location>
</feature>
<feature type="compositionally biased region" description="Basic and acidic residues" evidence="4">
    <location>
        <begin position="523"/>
        <end position="552"/>
    </location>
</feature>
<feature type="compositionally biased region" description="Acidic residues" evidence="4">
    <location>
        <begin position="553"/>
        <end position="601"/>
    </location>
</feature>
<feature type="compositionally biased region" description="Basic and acidic residues" evidence="4">
    <location>
        <begin position="602"/>
        <end position="612"/>
    </location>
</feature>
<feature type="compositionally biased region" description="Low complexity" evidence="4">
    <location>
        <begin position="651"/>
        <end position="667"/>
    </location>
</feature>
<feature type="compositionally biased region" description="Acidic residues" evidence="4">
    <location>
        <begin position="668"/>
        <end position="678"/>
    </location>
</feature>
<feature type="compositionally biased region" description="Basic residues" evidence="4">
    <location>
        <begin position="686"/>
        <end position="695"/>
    </location>
</feature>
<feature type="active site" evidence="3">
    <location>
        <position position="196"/>
    </location>
</feature>
<feature type="active site" evidence="3">
    <location>
        <position position="404"/>
    </location>
</feature>
<feature type="active site" evidence="3">
    <location>
        <position position="468"/>
    </location>
</feature>
<feature type="glycosylation site" description="N-linked (GlcNAc...) asparagine" evidence="2">
    <location>
        <position position="457"/>
    </location>
</feature>
<feature type="glycosylation site" description="N-linked (GlcNAc...) asparagine" evidence="2">
    <location>
        <position position="465"/>
    </location>
</feature>
<accession>A7TLB3</accession>
<gene>
    <name type="primary">KEX1</name>
    <name type="ORF">Kpol_1041p46</name>
</gene>
<comment type="function">
    <text evidence="1">Protease with a carboxypeptidase B-like function involved in the C-terminal processing of the lysine and arginine residues from protein precursors. Promotes cell fusion and is involved in the programmed cell death (By similarity).</text>
</comment>
<comment type="catalytic activity">
    <reaction>
        <text>Preferential release of a C-terminal arginine or lysine residue.</text>
        <dbReference type="EC" id="3.4.16.6"/>
    </reaction>
</comment>
<comment type="subcellular location">
    <subcellularLocation>
        <location evidence="1">Golgi apparatus</location>
        <location evidence="1">trans-Golgi network membrane</location>
        <topology evidence="1">Single-pass type I membrane protein</topology>
    </subcellularLocation>
</comment>
<comment type="similarity">
    <text evidence="5">Belongs to the peptidase S10 family.</text>
</comment>
<protein>
    <recommendedName>
        <fullName>Pheromone-processing carboxypeptidase KEX1</fullName>
        <ecNumber>3.4.16.6</ecNumber>
    </recommendedName>
    <alternativeName>
        <fullName>Carboxypeptidase D</fullName>
    </alternativeName>
</protein>
<sequence length="713" mass="80063">MMVSYKLLSLITLLFVAQCTTGLLKQDDYVVRPDLLPGISSIKDKALIPKMYAGHIPLNLQKTTDENENTDESDSNSNTNYFFWKFQHQSVESPNLIFWLNGGPGCSSMDGALVETGPFRVDKNGKLYPNEGSWHSRGDLVYIDQPIGTGLSTSAAIPNLLDDLKEVSDNFILFLENYFTIFPNDLDKDIIIAGESYAGQYIPFFAKAIKEYNQKISDNKKKINLRMLLIGNGWIDPITQSLSYLPFAIEKNLVGKDTPDFETLLKAHEKCQNKINSISEDDNSFSHEECESIINMLVSVTKDNSPNVKSNEVCINIYDFNLRDSFPACGANWPIDVSHVAKFFSTPGVIEALNLNAEEVPRWKECNYDVLNHLTNPVSKPSVRLLPELLESGIEIILFNGENDLVCNNKGITDMISKLTWNGATGFSDKVQKYEWLFRDLTKDTEEPAGTVTFDRNLTFISVYNASHMVAYDKSIVARGILDIYLDNVMLVEKETDSPDVLISTNEPTFSDIEEEELDGEKEDEKDGVTEGDGEKSDTDEGKDTDKGKDEKNDDDDDDDDDSDDDSDDDDDDDDDDDDDDDDDDDSDDDDDDDDDSDDNEKDDKSESETKTHPKAKIALLLLLFISVFGITGSQALRQRNFQFRRAPLTSNSFSSSSSPNDPSNWDSNDDFDFDIENDPLPSTNNKHKAAKKKKDYVSIPSDIDESFELAEI</sequence>
<dbReference type="EC" id="3.4.16.6"/>
<dbReference type="EMBL" id="DS480413">
    <property type="protein sequence ID" value="EDO16988.1"/>
    <property type="molecule type" value="Genomic_DNA"/>
</dbReference>
<dbReference type="RefSeq" id="XP_001644846.1">
    <property type="nucleotide sequence ID" value="XM_001644796.1"/>
</dbReference>
<dbReference type="SMR" id="A7TLB3"/>
<dbReference type="FunCoup" id="A7TLB3">
    <property type="interactions" value="124"/>
</dbReference>
<dbReference type="STRING" id="436907.A7TLB3"/>
<dbReference type="ESTHER" id="vanpo-kex1">
    <property type="family name" value="Carboxypeptidase_S10"/>
</dbReference>
<dbReference type="MEROPS" id="S10.007"/>
<dbReference type="GlyCosmos" id="A7TLB3">
    <property type="glycosylation" value="2 sites, No reported glycans"/>
</dbReference>
<dbReference type="GeneID" id="5545175"/>
<dbReference type="KEGG" id="vpo:Kpol_1041p46"/>
<dbReference type="eggNOG" id="KOG1282">
    <property type="taxonomic scope" value="Eukaryota"/>
</dbReference>
<dbReference type="HOGENOM" id="CLU_008523_11_2_1"/>
<dbReference type="InParanoid" id="A7TLB3"/>
<dbReference type="OMA" id="NAHENCQ"/>
<dbReference type="OrthoDB" id="443318at2759"/>
<dbReference type="PhylomeDB" id="A7TLB3"/>
<dbReference type="Proteomes" id="UP000000267">
    <property type="component" value="Unassembled WGS sequence"/>
</dbReference>
<dbReference type="GO" id="GO:0016020">
    <property type="term" value="C:membrane"/>
    <property type="evidence" value="ECO:0007669"/>
    <property type="project" value="UniProtKB-KW"/>
</dbReference>
<dbReference type="GO" id="GO:0005802">
    <property type="term" value="C:trans-Golgi network"/>
    <property type="evidence" value="ECO:0007669"/>
    <property type="project" value="EnsemblFungi"/>
</dbReference>
<dbReference type="GO" id="GO:0004185">
    <property type="term" value="F:serine-type carboxypeptidase activity"/>
    <property type="evidence" value="ECO:0007669"/>
    <property type="project" value="UniProtKB-EC"/>
</dbReference>
<dbReference type="GO" id="GO:0006915">
    <property type="term" value="P:apoptotic process"/>
    <property type="evidence" value="ECO:0007669"/>
    <property type="project" value="UniProtKB-KW"/>
</dbReference>
<dbReference type="GO" id="GO:0006508">
    <property type="term" value="P:proteolysis"/>
    <property type="evidence" value="ECO:0007669"/>
    <property type="project" value="UniProtKB-KW"/>
</dbReference>
<dbReference type="Gene3D" id="3.40.50.1820">
    <property type="entry name" value="alpha/beta hydrolase"/>
    <property type="match status" value="1"/>
</dbReference>
<dbReference type="InterPro" id="IPR029058">
    <property type="entry name" value="AB_hydrolase_fold"/>
</dbReference>
<dbReference type="InterPro" id="IPR001563">
    <property type="entry name" value="Peptidase_S10"/>
</dbReference>
<dbReference type="InterPro" id="IPR018202">
    <property type="entry name" value="Ser_caboxypep_ser_AS"/>
</dbReference>
<dbReference type="PANTHER" id="PTHR11802:SF190">
    <property type="entry name" value="PHEROMONE-PROCESSING CARBOXYPEPTIDASE KEX1"/>
    <property type="match status" value="1"/>
</dbReference>
<dbReference type="PANTHER" id="PTHR11802">
    <property type="entry name" value="SERINE PROTEASE FAMILY S10 SERINE CARBOXYPEPTIDASE"/>
    <property type="match status" value="1"/>
</dbReference>
<dbReference type="Pfam" id="PF00450">
    <property type="entry name" value="Peptidase_S10"/>
    <property type="match status" value="1"/>
</dbReference>
<dbReference type="PRINTS" id="PR00724">
    <property type="entry name" value="CRBOXYPTASEC"/>
</dbReference>
<dbReference type="SUPFAM" id="SSF53474">
    <property type="entry name" value="alpha/beta-Hydrolases"/>
    <property type="match status" value="1"/>
</dbReference>
<dbReference type="PROSITE" id="PS00131">
    <property type="entry name" value="CARBOXYPEPT_SER_SER"/>
    <property type="match status" value="1"/>
</dbReference>
<name>KEX1_VANPO</name>
<reference key="1">
    <citation type="journal article" date="2007" name="Proc. Natl. Acad. Sci. U.S.A.">
        <title>Independent sorting-out of thousands of duplicated gene pairs in two yeast species descended from a whole-genome duplication.</title>
        <authorList>
            <person name="Scannell D.R."/>
            <person name="Frank A.C."/>
            <person name="Conant G.C."/>
            <person name="Byrne K.P."/>
            <person name="Woolfit M."/>
            <person name="Wolfe K.H."/>
        </authorList>
    </citation>
    <scope>NUCLEOTIDE SEQUENCE [LARGE SCALE GENOMIC DNA]</scope>
    <source>
        <strain>ATCC 22028 / DSM 70294 / BCRC 21397 / CBS 2163 / NBRC 10782 / NRRL Y-8283 / UCD 57-17</strain>
    </source>
</reference>